<accession>A5CRX9</accession>
<evidence type="ECO:0000255" key="1">
    <source>
        <dbReference type="HAMAP-Rule" id="MF_00001"/>
    </source>
</evidence>
<sequence length="318" mass="33998">MRHLLSTRDLSRDEAVHILDVAEDMADVGTREIKKTPALRGRTVVNLFFEDSTRTRISFEAAAKRLSADVINFSAKGSSVSKGESLKDTAQTLQAMGADGVVVRHPSSGAPHTLAGSGWIDAGIVNAGDGTHEHPTQALLDAFTIRRRLHGTAARGKGLDGTRVVIVGDVLHSRVARSNAWLLTTLGAEVTLVAPPTLVPVGVGSWPVTVRYDLDAALAEGKPDAVMMLRIQAERMRAAFFPNPCEYARIWGLDDARLALLGPDTIVMHPGPMNRGLEISAAAADSERSTVREQVANGVSVRMAVLYLLLSGDGKADR</sequence>
<proteinExistence type="inferred from homology"/>
<keyword id="KW-0665">Pyrimidine biosynthesis</keyword>
<keyword id="KW-0808">Transferase</keyword>
<reference key="1">
    <citation type="journal article" date="2008" name="J. Bacteriol.">
        <title>The genome sequence of the tomato-pathogenic actinomycete Clavibacter michiganensis subsp. michiganensis NCPPB382 reveals a large island involved in pathogenicity.</title>
        <authorList>
            <person name="Gartemann K.-H."/>
            <person name="Abt B."/>
            <person name="Bekel T."/>
            <person name="Burger A."/>
            <person name="Engemann J."/>
            <person name="Fluegel M."/>
            <person name="Gaigalat L."/>
            <person name="Goesmann A."/>
            <person name="Graefen I."/>
            <person name="Kalinowski J."/>
            <person name="Kaup O."/>
            <person name="Kirchner O."/>
            <person name="Krause L."/>
            <person name="Linke B."/>
            <person name="McHardy A."/>
            <person name="Meyer F."/>
            <person name="Pohle S."/>
            <person name="Rueckert C."/>
            <person name="Schneiker S."/>
            <person name="Zellermann E.-M."/>
            <person name="Puehler A."/>
            <person name="Eichenlaub R."/>
            <person name="Kaiser O."/>
            <person name="Bartels D."/>
        </authorList>
    </citation>
    <scope>NUCLEOTIDE SEQUENCE [LARGE SCALE GENOMIC DNA]</scope>
    <source>
        <strain>NCPPB 382</strain>
    </source>
</reference>
<gene>
    <name evidence="1" type="primary">pyrB</name>
    <name type="ordered locus">CMM_1786</name>
</gene>
<protein>
    <recommendedName>
        <fullName evidence="1">Aspartate carbamoyltransferase catalytic subunit</fullName>
        <ecNumber evidence="1">2.1.3.2</ecNumber>
    </recommendedName>
    <alternativeName>
        <fullName evidence="1">Aspartate transcarbamylase</fullName>
        <shortName evidence="1">ATCase</shortName>
    </alternativeName>
</protein>
<dbReference type="EC" id="2.1.3.2" evidence="1"/>
<dbReference type="EMBL" id="AM711867">
    <property type="protein sequence ID" value="CAN01842.1"/>
    <property type="molecule type" value="Genomic_DNA"/>
</dbReference>
<dbReference type="RefSeq" id="WP_012038474.1">
    <property type="nucleotide sequence ID" value="NC_009480.1"/>
</dbReference>
<dbReference type="SMR" id="A5CRX9"/>
<dbReference type="KEGG" id="cmi:CMM_1786"/>
<dbReference type="eggNOG" id="COG0540">
    <property type="taxonomic scope" value="Bacteria"/>
</dbReference>
<dbReference type="HOGENOM" id="CLU_043846_2_0_11"/>
<dbReference type="OrthoDB" id="9774690at2"/>
<dbReference type="UniPathway" id="UPA00070">
    <property type="reaction ID" value="UER00116"/>
</dbReference>
<dbReference type="Proteomes" id="UP000001564">
    <property type="component" value="Chromosome"/>
</dbReference>
<dbReference type="GO" id="GO:0005829">
    <property type="term" value="C:cytosol"/>
    <property type="evidence" value="ECO:0007669"/>
    <property type="project" value="TreeGrafter"/>
</dbReference>
<dbReference type="GO" id="GO:0016597">
    <property type="term" value="F:amino acid binding"/>
    <property type="evidence" value="ECO:0007669"/>
    <property type="project" value="InterPro"/>
</dbReference>
<dbReference type="GO" id="GO:0004070">
    <property type="term" value="F:aspartate carbamoyltransferase activity"/>
    <property type="evidence" value="ECO:0007669"/>
    <property type="project" value="UniProtKB-UniRule"/>
</dbReference>
<dbReference type="GO" id="GO:0006207">
    <property type="term" value="P:'de novo' pyrimidine nucleobase biosynthetic process"/>
    <property type="evidence" value="ECO:0007669"/>
    <property type="project" value="InterPro"/>
</dbReference>
<dbReference type="GO" id="GO:0044205">
    <property type="term" value="P:'de novo' UMP biosynthetic process"/>
    <property type="evidence" value="ECO:0007669"/>
    <property type="project" value="UniProtKB-UniRule"/>
</dbReference>
<dbReference type="GO" id="GO:0006520">
    <property type="term" value="P:amino acid metabolic process"/>
    <property type="evidence" value="ECO:0007669"/>
    <property type="project" value="InterPro"/>
</dbReference>
<dbReference type="FunFam" id="3.40.50.1370:FF:000007">
    <property type="entry name" value="Aspartate carbamoyltransferase"/>
    <property type="match status" value="1"/>
</dbReference>
<dbReference type="FunFam" id="3.40.50.1370:FF:000012">
    <property type="entry name" value="Aspartate carbamoyltransferase"/>
    <property type="match status" value="1"/>
</dbReference>
<dbReference type="Gene3D" id="3.40.50.1370">
    <property type="entry name" value="Aspartate/ornithine carbamoyltransferase"/>
    <property type="match status" value="2"/>
</dbReference>
<dbReference type="HAMAP" id="MF_00001">
    <property type="entry name" value="Asp_carb_tr"/>
    <property type="match status" value="1"/>
</dbReference>
<dbReference type="InterPro" id="IPR006132">
    <property type="entry name" value="Asp/Orn_carbamoyltranf_P-bd"/>
</dbReference>
<dbReference type="InterPro" id="IPR006130">
    <property type="entry name" value="Asp/Orn_carbamoylTrfase"/>
</dbReference>
<dbReference type="InterPro" id="IPR036901">
    <property type="entry name" value="Asp/Orn_carbamoylTrfase_sf"/>
</dbReference>
<dbReference type="InterPro" id="IPR002082">
    <property type="entry name" value="Asp_carbamoyltransf"/>
</dbReference>
<dbReference type="InterPro" id="IPR006131">
    <property type="entry name" value="Asp_carbamoyltransf_Asp/Orn-bd"/>
</dbReference>
<dbReference type="NCBIfam" id="TIGR00670">
    <property type="entry name" value="asp_carb_tr"/>
    <property type="match status" value="1"/>
</dbReference>
<dbReference type="NCBIfam" id="NF002032">
    <property type="entry name" value="PRK00856.1"/>
    <property type="match status" value="1"/>
</dbReference>
<dbReference type="PANTHER" id="PTHR45753:SF6">
    <property type="entry name" value="ASPARTATE CARBAMOYLTRANSFERASE"/>
    <property type="match status" value="1"/>
</dbReference>
<dbReference type="PANTHER" id="PTHR45753">
    <property type="entry name" value="ORNITHINE CARBAMOYLTRANSFERASE, MITOCHONDRIAL"/>
    <property type="match status" value="1"/>
</dbReference>
<dbReference type="Pfam" id="PF00185">
    <property type="entry name" value="OTCace"/>
    <property type="match status" value="1"/>
</dbReference>
<dbReference type="Pfam" id="PF02729">
    <property type="entry name" value="OTCace_N"/>
    <property type="match status" value="1"/>
</dbReference>
<dbReference type="PRINTS" id="PR00100">
    <property type="entry name" value="AOTCASE"/>
</dbReference>
<dbReference type="PRINTS" id="PR00101">
    <property type="entry name" value="ATCASE"/>
</dbReference>
<dbReference type="SUPFAM" id="SSF53671">
    <property type="entry name" value="Aspartate/ornithine carbamoyltransferase"/>
    <property type="match status" value="1"/>
</dbReference>
<dbReference type="PROSITE" id="PS00097">
    <property type="entry name" value="CARBAMOYLTRANSFERASE"/>
    <property type="match status" value="1"/>
</dbReference>
<organism>
    <name type="scientific">Clavibacter michiganensis subsp. michiganensis (strain NCPPB 382)</name>
    <dbReference type="NCBI Taxonomy" id="443906"/>
    <lineage>
        <taxon>Bacteria</taxon>
        <taxon>Bacillati</taxon>
        <taxon>Actinomycetota</taxon>
        <taxon>Actinomycetes</taxon>
        <taxon>Micrococcales</taxon>
        <taxon>Microbacteriaceae</taxon>
        <taxon>Clavibacter</taxon>
    </lineage>
</organism>
<name>PYRB_CLAM3</name>
<comment type="function">
    <text evidence="1">Catalyzes the condensation of carbamoyl phosphate and aspartate to form carbamoyl aspartate and inorganic phosphate, the committed step in the de novo pyrimidine nucleotide biosynthesis pathway.</text>
</comment>
<comment type="catalytic activity">
    <reaction evidence="1">
        <text>carbamoyl phosphate + L-aspartate = N-carbamoyl-L-aspartate + phosphate + H(+)</text>
        <dbReference type="Rhea" id="RHEA:20013"/>
        <dbReference type="ChEBI" id="CHEBI:15378"/>
        <dbReference type="ChEBI" id="CHEBI:29991"/>
        <dbReference type="ChEBI" id="CHEBI:32814"/>
        <dbReference type="ChEBI" id="CHEBI:43474"/>
        <dbReference type="ChEBI" id="CHEBI:58228"/>
        <dbReference type="EC" id="2.1.3.2"/>
    </reaction>
</comment>
<comment type="pathway">
    <text evidence="1">Pyrimidine metabolism; UMP biosynthesis via de novo pathway; (S)-dihydroorotate from bicarbonate: step 2/3.</text>
</comment>
<comment type="subunit">
    <text evidence="1">Heterododecamer (2C3:3R2) of six catalytic PyrB chains organized as two trimers (C3), and six regulatory PyrI chains organized as three dimers (R2).</text>
</comment>
<comment type="similarity">
    <text evidence="1">Belongs to the aspartate/ornithine carbamoyltransferase superfamily. ATCase family.</text>
</comment>
<feature type="chain" id="PRO_1000000006" description="Aspartate carbamoyltransferase catalytic subunit">
    <location>
        <begin position="1"/>
        <end position="318"/>
    </location>
</feature>
<feature type="binding site" evidence="1">
    <location>
        <position position="54"/>
    </location>
    <ligand>
        <name>carbamoyl phosphate</name>
        <dbReference type="ChEBI" id="CHEBI:58228"/>
    </ligand>
</feature>
<feature type="binding site" evidence="1">
    <location>
        <position position="55"/>
    </location>
    <ligand>
        <name>carbamoyl phosphate</name>
        <dbReference type="ChEBI" id="CHEBI:58228"/>
    </ligand>
</feature>
<feature type="binding site" evidence="1">
    <location>
        <position position="82"/>
    </location>
    <ligand>
        <name>L-aspartate</name>
        <dbReference type="ChEBI" id="CHEBI:29991"/>
    </ligand>
</feature>
<feature type="binding site" evidence="1">
    <location>
        <position position="104"/>
    </location>
    <ligand>
        <name>carbamoyl phosphate</name>
        <dbReference type="ChEBI" id="CHEBI:58228"/>
    </ligand>
</feature>
<feature type="binding site" evidence="1">
    <location>
        <position position="134"/>
    </location>
    <ligand>
        <name>carbamoyl phosphate</name>
        <dbReference type="ChEBI" id="CHEBI:58228"/>
    </ligand>
</feature>
<feature type="binding site" evidence="1">
    <location>
        <position position="137"/>
    </location>
    <ligand>
        <name>carbamoyl phosphate</name>
        <dbReference type="ChEBI" id="CHEBI:58228"/>
    </ligand>
</feature>
<feature type="binding site" evidence="1">
    <location>
        <position position="174"/>
    </location>
    <ligand>
        <name>L-aspartate</name>
        <dbReference type="ChEBI" id="CHEBI:29991"/>
    </ligand>
</feature>
<feature type="binding site" evidence="1">
    <location>
        <position position="230"/>
    </location>
    <ligand>
        <name>L-aspartate</name>
        <dbReference type="ChEBI" id="CHEBI:29991"/>
    </ligand>
</feature>
<feature type="binding site" evidence="1">
    <location>
        <position position="271"/>
    </location>
    <ligand>
        <name>carbamoyl phosphate</name>
        <dbReference type="ChEBI" id="CHEBI:58228"/>
    </ligand>
</feature>
<feature type="binding site" evidence="1">
    <location>
        <position position="272"/>
    </location>
    <ligand>
        <name>carbamoyl phosphate</name>
        <dbReference type="ChEBI" id="CHEBI:58228"/>
    </ligand>
</feature>